<accession>Q89X82</accession>
<feature type="chain" id="PRO_0000198100" description="Ribosomal RNA large subunit methyltransferase H">
    <location>
        <begin position="1"/>
        <end position="160"/>
    </location>
</feature>
<feature type="binding site" evidence="1">
    <location>
        <position position="76"/>
    </location>
    <ligand>
        <name>S-adenosyl-L-methionine</name>
        <dbReference type="ChEBI" id="CHEBI:59789"/>
    </ligand>
</feature>
<feature type="binding site" evidence="1">
    <location>
        <position position="108"/>
    </location>
    <ligand>
        <name>S-adenosyl-L-methionine</name>
        <dbReference type="ChEBI" id="CHEBI:59789"/>
    </ligand>
</feature>
<evidence type="ECO:0000255" key="1">
    <source>
        <dbReference type="HAMAP-Rule" id="MF_00658"/>
    </source>
</evidence>
<dbReference type="EC" id="2.1.1.177" evidence="1"/>
<dbReference type="EMBL" id="BA000040">
    <property type="protein sequence ID" value="BAC45697.1"/>
    <property type="molecule type" value="Genomic_DNA"/>
</dbReference>
<dbReference type="RefSeq" id="NP_767072.1">
    <property type="nucleotide sequence ID" value="NC_004463.1"/>
</dbReference>
<dbReference type="RefSeq" id="WP_011083264.1">
    <property type="nucleotide sequence ID" value="NC_004463.1"/>
</dbReference>
<dbReference type="SMR" id="Q89X82"/>
<dbReference type="FunCoup" id="Q89X82">
    <property type="interactions" value="412"/>
</dbReference>
<dbReference type="STRING" id="224911.AAV28_41410"/>
<dbReference type="EnsemblBacteria" id="BAC45697">
    <property type="protein sequence ID" value="BAC45697"/>
    <property type="gene ID" value="BAC45697"/>
</dbReference>
<dbReference type="GeneID" id="46495578"/>
<dbReference type="KEGG" id="bja:blr0432"/>
<dbReference type="PATRIC" id="fig|224911.44.peg.8962"/>
<dbReference type="eggNOG" id="COG1576">
    <property type="taxonomic scope" value="Bacteria"/>
</dbReference>
<dbReference type="HOGENOM" id="CLU_100552_1_1_5"/>
<dbReference type="InParanoid" id="Q89X82"/>
<dbReference type="OrthoDB" id="9806643at2"/>
<dbReference type="PhylomeDB" id="Q89X82"/>
<dbReference type="Proteomes" id="UP000002526">
    <property type="component" value="Chromosome"/>
</dbReference>
<dbReference type="GO" id="GO:0005737">
    <property type="term" value="C:cytoplasm"/>
    <property type="evidence" value="ECO:0007669"/>
    <property type="project" value="UniProtKB-SubCell"/>
</dbReference>
<dbReference type="GO" id="GO:0070038">
    <property type="term" value="F:rRNA (pseudouridine-N3-)-methyltransferase activity"/>
    <property type="evidence" value="ECO:0007669"/>
    <property type="project" value="UniProtKB-UniRule"/>
</dbReference>
<dbReference type="CDD" id="cd18081">
    <property type="entry name" value="RlmH-like"/>
    <property type="match status" value="1"/>
</dbReference>
<dbReference type="Gene3D" id="3.40.1280.10">
    <property type="match status" value="1"/>
</dbReference>
<dbReference type="HAMAP" id="MF_00658">
    <property type="entry name" value="23SrRNA_methyltr_H"/>
    <property type="match status" value="1"/>
</dbReference>
<dbReference type="InterPro" id="IPR029028">
    <property type="entry name" value="Alpha/beta_knot_MTases"/>
</dbReference>
<dbReference type="InterPro" id="IPR003742">
    <property type="entry name" value="RlmH-like"/>
</dbReference>
<dbReference type="InterPro" id="IPR029026">
    <property type="entry name" value="tRNA_m1G_MTases_N"/>
</dbReference>
<dbReference type="NCBIfam" id="NF000989">
    <property type="entry name" value="PRK00103.2-3"/>
    <property type="match status" value="1"/>
</dbReference>
<dbReference type="NCBIfam" id="NF000991">
    <property type="entry name" value="PRK00103.2-5"/>
    <property type="match status" value="1"/>
</dbReference>
<dbReference type="PANTHER" id="PTHR33603">
    <property type="entry name" value="METHYLTRANSFERASE"/>
    <property type="match status" value="1"/>
</dbReference>
<dbReference type="PANTHER" id="PTHR33603:SF1">
    <property type="entry name" value="RIBOSOMAL RNA LARGE SUBUNIT METHYLTRANSFERASE H"/>
    <property type="match status" value="1"/>
</dbReference>
<dbReference type="Pfam" id="PF02590">
    <property type="entry name" value="SPOUT_MTase"/>
    <property type="match status" value="1"/>
</dbReference>
<dbReference type="PIRSF" id="PIRSF004505">
    <property type="entry name" value="MT_bac"/>
    <property type="match status" value="1"/>
</dbReference>
<dbReference type="SUPFAM" id="SSF75217">
    <property type="entry name" value="alpha/beta knot"/>
    <property type="match status" value="1"/>
</dbReference>
<comment type="function">
    <text evidence="1">Specifically methylates the pseudouridine at position 1915 (m3Psi1915) in 23S rRNA.</text>
</comment>
<comment type="catalytic activity">
    <reaction evidence="1">
        <text>pseudouridine(1915) in 23S rRNA + S-adenosyl-L-methionine = N(3)-methylpseudouridine(1915) in 23S rRNA + S-adenosyl-L-homocysteine + H(+)</text>
        <dbReference type="Rhea" id="RHEA:42752"/>
        <dbReference type="Rhea" id="RHEA-COMP:10221"/>
        <dbReference type="Rhea" id="RHEA-COMP:10222"/>
        <dbReference type="ChEBI" id="CHEBI:15378"/>
        <dbReference type="ChEBI" id="CHEBI:57856"/>
        <dbReference type="ChEBI" id="CHEBI:59789"/>
        <dbReference type="ChEBI" id="CHEBI:65314"/>
        <dbReference type="ChEBI" id="CHEBI:74486"/>
        <dbReference type="EC" id="2.1.1.177"/>
    </reaction>
</comment>
<comment type="subunit">
    <text evidence="1">Homodimer.</text>
</comment>
<comment type="subcellular location">
    <subcellularLocation>
        <location evidence="1">Cytoplasm</location>
    </subcellularLocation>
</comment>
<comment type="similarity">
    <text evidence="1">Belongs to the RNA methyltransferase RlmH family.</text>
</comment>
<proteinExistence type="inferred from homology"/>
<name>RLMH_BRADU</name>
<keyword id="KW-0963">Cytoplasm</keyword>
<keyword id="KW-0489">Methyltransferase</keyword>
<keyword id="KW-1185">Reference proteome</keyword>
<keyword id="KW-0698">rRNA processing</keyword>
<keyword id="KW-0949">S-adenosyl-L-methionine</keyword>
<keyword id="KW-0808">Transferase</keyword>
<reference key="1">
    <citation type="journal article" date="2002" name="DNA Res.">
        <title>Complete genomic sequence of nitrogen-fixing symbiotic bacterium Bradyrhizobium japonicum USDA110.</title>
        <authorList>
            <person name="Kaneko T."/>
            <person name="Nakamura Y."/>
            <person name="Sato S."/>
            <person name="Minamisawa K."/>
            <person name="Uchiumi T."/>
            <person name="Sasamoto S."/>
            <person name="Watanabe A."/>
            <person name="Idesawa K."/>
            <person name="Iriguchi M."/>
            <person name="Kawashima K."/>
            <person name="Kohara M."/>
            <person name="Matsumoto M."/>
            <person name="Shimpo S."/>
            <person name="Tsuruoka H."/>
            <person name="Wada T."/>
            <person name="Yamada M."/>
            <person name="Tabata S."/>
        </authorList>
    </citation>
    <scope>NUCLEOTIDE SEQUENCE [LARGE SCALE GENOMIC DNA]</scope>
    <source>
        <strain>JCM 10833 / BCRC 13528 / IAM 13628 / NBRC 14792 / USDA 110</strain>
    </source>
</reference>
<gene>
    <name evidence="1" type="primary">rlmH</name>
    <name type="ordered locus">blr0432</name>
</gene>
<sequence>MRVAVIAVGRLKQGPERELADRYFERFDEAGRKLGFRELSIHEIPESRARDAATRMAEEAAAIGAYIPDKSILVALDERGQNLDSTVFARHLGRWRDEGAGHTIFVIGGADGLSPELRRKAKLAIAFGSATWPHQMVRVMLLEQLYRAATILAGHPYHRA</sequence>
<protein>
    <recommendedName>
        <fullName evidence="1">Ribosomal RNA large subunit methyltransferase H</fullName>
        <ecNumber evidence="1">2.1.1.177</ecNumber>
    </recommendedName>
    <alternativeName>
        <fullName evidence="1">23S rRNA (pseudouridine1915-N3)-methyltransferase</fullName>
    </alternativeName>
    <alternativeName>
        <fullName evidence="1">23S rRNA m3Psi1915 methyltransferase</fullName>
    </alternativeName>
    <alternativeName>
        <fullName evidence="1">rRNA (pseudouridine-N3-)-methyltransferase RlmH</fullName>
    </alternativeName>
</protein>
<organism>
    <name type="scientific">Bradyrhizobium diazoefficiens (strain JCM 10833 / BCRC 13528 / IAM 13628 / NBRC 14792 / USDA 110)</name>
    <dbReference type="NCBI Taxonomy" id="224911"/>
    <lineage>
        <taxon>Bacteria</taxon>
        <taxon>Pseudomonadati</taxon>
        <taxon>Pseudomonadota</taxon>
        <taxon>Alphaproteobacteria</taxon>
        <taxon>Hyphomicrobiales</taxon>
        <taxon>Nitrobacteraceae</taxon>
        <taxon>Bradyrhizobium</taxon>
    </lineage>
</organism>